<organism>
    <name type="scientific">Escherichia coli (strain K12)</name>
    <dbReference type="NCBI Taxonomy" id="83333"/>
    <lineage>
        <taxon>Bacteria</taxon>
        <taxon>Pseudomonadati</taxon>
        <taxon>Pseudomonadota</taxon>
        <taxon>Gammaproteobacteria</taxon>
        <taxon>Enterobacterales</taxon>
        <taxon>Enterobacteriaceae</taxon>
        <taxon>Escherichia</taxon>
    </lineage>
</organism>
<protein>
    <recommendedName>
        <fullName>Type 1 fimbrin D-mannose specific adhesin</fullName>
    </recommendedName>
    <alternativeName>
        <fullName>Protein FimH</fullName>
    </alternativeName>
</protein>
<keyword id="KW-0002">3D-structure</keyword>
<keyword id="KW-0903">Direct protein sequencing</keyword>
<keyword id="KW-0281">Fimbrium</keyword>
<keyword id="KW-1185">Reference proteome</keyword>
<keyword id="KW-0732">Signal</keyword>
<comment type="function">
    <text evidence="1">Involved in regulation of length and mediation of adhesion of type 1 fimbriae (but not necessary for the production of fimbriae). Adhesin responsible for the binding to D-mannose. It is laterally positioned at intervals in the structure of the type 1 fimbriae. In order to integrate FimH in the fimbriae FimF and FimG are needed.</text>
</comment>
<comment type="interaction">
    <interactant intactId="EBI-1028015">
        <id>P08191</id>
    </interactant>
    <interactant intactId="EBI-1028005">
        <id>P31697</id>
        <label>fimC</label>
    </interactant>
    <organismsDiffer>false</organismsDiffer>
    <experiments>11</experiments>
</comment>
<comment type="interaction">
    <interactant intactId="EBI-1028015">
        <id>P08191</id>
    </interactant>
    <interactant intactId="EBI-14031976">
        <id>O00322</id>
        <label>UPK1A</label>
    </interactant>
    <organismsDiffer>true</organismsDiffer>
    <experiments>2</experiments>
</comment>
<comment type="subcellular location">
    <subcellularLocation>
        <location evidence="1">Fimbrium</location>
    </subcellularLocation>
</comment>
<comment type="similarity">
    <text evidence="3">Belongs to the fimbrial protein family.</text>
</comment>
<reference key="1">
    <citation type="journal article" date="1987" name="Mol. Gen. Genet.">
        <title>Three fim genes required for the regulation of length and mediation of adhesion of Escherichia coli type 1 fimbriae.</title>
        <authorList>
            <person name="Klemm P."/>
            <person name="Christiansen G."/>
        </authorList>
    </citation>
    <scope>NUCLEOTIDE SEQUENCE [GENOMIC DNA]</scope>
    <source>
        <strain>K12</strain>
    </source>
</reference>
<reference key="2">
    <citation type="journal article" date="1994" name="J. Bacteriol.">
        <title>FimH family of type 1 fimbrial adhesins: functional heterogeneity due to minor sequence variations among fimH genes.</title>
        <authorList>
            <person name="Sokurenko E.V."/>
            <person name="Courtney H.S."/>
            <person name="Ohman D.E."/>
            <person name="Klemm P."/>
            <person name="Hasty D.L."/>
        </authorList>
    </citation>
    <scope>NUCLEOTIDE SEQUENCE [GENOMIC DNA]</scope>
    <source>
        <strain>K12 / CSH-50</strain>
    </source>
</reference>
<reference key="3">
    <citation type="journal article" date="1995" name="Nucleic Acids Res.">
        <title>Analysis of the Escherichia coli genome VI: DNA sequence of the region from 92.8 through 100 minutes.</title>
        <authorList>
            <person name="Burland V.D."/>
            <person name="Plunkett G. III"/>
            <person name="Sofia H.J."/>
            <person name="Daniels D.L."/>
            <person name="Blattner F.R."/>
        </authorList>
    </citation>
    <scope>NUCLEOTIDE SEQUENCE [LARGE SCALE GENOMIC DNA]</scope>
    <source>
        <strain>K12 / MG1655 / ATCC 47076</strain>
    </source>
</reference>
<reference key="4">
    <citation type="journal article" date="1997" name="Science">
        <title>The complete genome sequence of Escherichia coli K-12.</title>
        <authorList>
            <person name="Blattner F.R."/>
            <person name="Plunkett G. III"/>
            <person name="Bloch C.A."/>
            <person name="Perna N.T."/>
            <person name="Burland V."/>
            <person name="Riley M."/>
            <person name="Collado-Vides J."/>
            <person name="Glasner J.D."/>
            <person name="Rode C.K."/>
            <person name="Mayhew G.F."/>
            <person name="Gregor J."/>
            <person name="Davis N.W."/>
            <person name="Kirkpatrick H.A."/>
            <person name="Goeden M.A."/>
            <person name="Rose D.J."/>
            <person name="Mau B."/>
            <person name="Shao Y."/>
        </authorList>
    </citation>
    <scope>NUCLEOTIDE SEQUENCE [LARGE SCALE GENOMIC DNA]</scope>
    <source>
        <strain>K12 / MG1655 / ATCC 47076</strain>
    </source>
</reference>
<reference key="5">
    <citation type="journal article" date="2006" name="Mol. Syst. Biol.">
        <title>Highly accurate genome sequences of Escherichia coli K-12 strains MG1655 and W3110.</title>
        <authorList>
            <person name="Hayashi K."/>
            <person name="Morooka N."/>
            <person name="Yamamoto Y."/>
            <person name="Fujita K."/>
            <person name="Isono K."/>
            <person name="Choi S."/>
            <person name="Ohtsubo E."/>
            <person name="Baba T."/>
            <person name="Wanner B.L."/>
            <person name="Mori H."/>
            <person name="Horiuchi T."/>
        </authorList>
    </citation>
    <scope>NUCLEOTIDE SEQUENCE [LARGE SCALE GENOMIC DNA]</scope>
    <source>
        <strain>K12 / W3110 / ATCC 27325 / DSM 5911</strain>
    </source>
</reference>
<reference key="6">
    <citation type="journal article" date="1988" name="J. Bacteriol.">
        <title>Purification of the Escherichia coli type 1 pilin and minor pilus proteins and partial characterization of the adhesin protein.</title>
        <authorList>
            <person name="Hanson M.S."/>
            <person name="Hempel J."/>
            <person name="Brinton C.C. Jr."/>
        </authorList>
    </citation>
    <scope>PROTEIN SEQUENCE OF 22-50</scope>
</reference>
<reference key="7">
    <citation type="journal article" date="1990" name="Infect. Immun.">
        <title>Direct evidence that the FimH protein is the mannose-specific adhesin of Escherichia coli type 1 fimbriae.</title>
        <authorList>
            <person name="Krogfelt K.A."/>
            <person name="Bergmans H."/>
            <person name="Klemm P."/>
        </authorList>
    </citation>
    <scope>FUNCTION</scope>
    <scope>SUBCELLULAR LOCATION</scope>
    <source>
        <strain>K12 / PC31</strain>
    </source>
</reference>
<reference key="8">
    <citation type="journal article" date="2002" name="Mol. Microbiol.">
        <title>Structural basis of tropism of Escherichia coli to the bladder during urinary tract infection.</title>
        <authorList>
            <person name="Hung C.S."/>
            <person name="Bouckaert J."/>
            <person name="Hung D."/>
            <person name="Pinkner J."/>
            <person name="Widberg C."/>
            <person name="DeFusco A."/>
            <person name="Auguste C.G."/>
            <person name="Strouse R."/>
            <person name="Langermann S."/>
            <person name="Waksman G."/>
            <person name="Hultgren S.J."/>
        </authorList>
    </citation>
    <scope>X-RAY CRYSTALLOGRAPHY (3.0 ANGSTROMS) OF 22-300</scope>
</reference>
<name>FIMH_ECOLI</name>
<gene>
    <name type="primary">fimH</name>
    <name type="ordered locus">b4320</name>
    <name type="ordered locus">JW4283</name>
</gene>
<accession>P08191</accession>
<accession>Q2M5Z3</accession>
<proteinExistence type="evidence at protein level"/>
<evidence type="ECO:0000269" key="1">
    <source>
    </source>
</evidence>
<evidence type="ECO:0000269" key="2">
    <source>
    </source>
</evidence>
<evidence type="ECO:0000305" key="3"/>
<evidence type="ECO:0007829" key="4">
    <source>
        <dbReference type="PDB" id="1KLF"/>
    </source>
</evidence>
<evidence type="ECO:0007829" key="5">
    <source>
        <dbReference type="PDB" id="1ZE3"/>
    </source>
</evidence>
<evidence type="ECO:0007829" key="6">
    <source>
        <dbReference type="PDB" id="4X5P"/>
    </source>
</evidence>
<evidence type="ECO:0007829" key="7">
    <source>
        <dbReference type="PDB" id="4XO9"/>
    </source>
</evidence>
<evidence type="ECO:0007829" key="8">
    <source>
        <dbReference type="PDB" id="4XOA"/>
    </source>
</evidence>
<evidence type="ECO:0007829" key="9">
    <source>
        <dbReference type="PDB" id="4XOD"/>
    </source>
</evidence>
<dbReference type="EMBL" id="X05672">
    <property type="protein sequence ID" value="CAA29156.1"/>
    <property type="molecule type" value="Genomic_DNA"/>
</dbReference>
<dbReference type="EMBL" id="U14003">
    <property type="protein sequence ID" value="AAA97216.1"/>
    <property type="molecule type" value="Genomic_DNA"/>
</dbReference>
<dbReference type="EMBL" id="U00096">
    <property type="protein sequence ID" value="AAC77276.1"/>
    <property type="molecule type" value="Genomic_DNA"/>
</dbReference>
<dbReference type="EMBL" id="AP009048">
    <property type="protein sequence ID" value="BAE78313.1"/>
    <property type="molecule type" value="Genomic_DNA"/>
</dbReference>
<dbReference type="PIR" id="S56545">
    <property type="entry name" value="S56545"/>
</dbReference>
<dbReference type="RefSeq" id="NP_418740.1">
    <property type="nucleotide sequence ID" value="NC_000913.3"/>
</dbReference>
<dbReference type="RefSeq" id="WP_000832247.1">
    <property type="nucleotide sequence ID" value="NZ_SSUV01000012.1"/>
</dbReference>
<dbReference type="PDB" id="1KIU">
    <property type="method" value="X-ray"/>
    <property type="resolution" value="3.00 A"/>
    <property type="chains" value="B/D/F/H/J/L/N/P=22-300"/>
</dbReference>
<dbReference type="PDB" id="1KLF">
    <property type="method" value="X-ray"/>
    <property type="resolution" value="2.79 A"/>
    <property type="chains" value="B/D/F/H/J/L/N/P=22-300"/>
</dbReference>
<dbReference type="PDB" id="1QUN">
    <property type="method" value="X-ray"/>
    <property type="resolution" value="2.80 A"/>
    <property type="chains" value="B/D/F/H/J/L/N/P=22-300"/>
</dbReference>
<dbReference type="PDB" id="1TR7">
    <property type="method" value="X-ray"/>
    <property type="resolution" value="2.10 A"/>
    <property type="chains" value="A/B=22-179"/>
</dbReference>
<dbReference type="PDB" id="1UWF">
    <property type="method" value="X-ray"/>
    <property type="resolution" value="1.69 A"/>
    <property type="chains" value="A=22-179"/>
</dbReference>
<dbReference type="PDB" id="1ZE3">
    <property type="method" value="X-ray"/>
    <property type="resolution" value="1.84 A"/>
    <property type="chains" value="H=179-300"/>
</dbReference>
<dbReference type="PDB" id="2VCO">
    <property type="method" value="X-ray"/>
    <property type="resolution" value="2.10 A"/>
    <property type="chains" value="A/B=22-179"/>
</dbReference>
<dbReference type="PDB" id="3RFZ">
    <property type="method" value="X-ray"/>
    <property type="resolution" value="2.80 A"/>
    <property type="chains" value="A/D=22-300"/>
</dbReference>
<dbReference type="PDB" id="3ZL1">
    <property type="method" value="X-ray"/>
    <property type="resolution" value="1.55 A"/>
    <property type="chains" value="A/B=22-179"/>
</dbReference>
<dbReference type="PDB" id="3ZL2">
    <property type="method" value="X-ray"/>
    <property type="resolution" value="1.25 A"/>
    <property type="chains" value="A=22-179"/>
</dbReference>
<dbReference type="PDB" id="4ATT">
    <property type="method" value="X-ray"/>
    <property type="resolution" value="1.25 A"/>
    <property type="chains" value="A=22-179"/>
</dbReference>
<dbReference type="PDB" id="4AUJ">
    <property type="method" value="X-ray"/>
    <property type="resolution" value="1.53 A"/>
    <property type="chains" value="A=22-179"/>
</dbReference>
<dbReference type="PDB" id="4AUU">
    <property type="method" value="X-ray"/>
    <property type="resolution" value="1.60 A"/>
    <property type="chains" value="A/B=22-179"/>
</dbReference>
<dbReference type="PDB" id="4AUY">
    <property type="method" value="X-ray"/>
    <property type="resolution" value="2.10 A"/>
    <property type="chains" value="A/B=22-179"/>
</dbReference>
<dbReference type="PDB" id="4AV0">
    <property type="method" value="X-ray"/>
    <property type="resolution" value="2.10 A"/>
    <property type="chains" value="A/B=22-179"/>
</dbReference>
<dbReference type="PDB" id="4AV4">
    <property type="method" value="X-ray"/>
    <property type="resolution" value="1.90 A"/>
    <property type="chains" value="A=22-179"/>
</dbReference>
<dbReference type="PDB" id="4AV5">
    <property type="method" value="X-ray"/>
    <property type="resolution" value="1.40 A"/>
    <property type="chains" value="A/B/C/D=22-179"/>
</dbReference>
<dbReference type="PDB" id="4AVH">
    <property type="method" value="X-ray"/>
    <property type="resolution" value="2.10 A"/>
    <property type="chains" value="A/B=22-179"/>
</dbReference>
<dbReference type="PDB" id="4AVI">
    <property type="method" value="X-ray"/>
    <property type="resolution" value="2.40 A"/>
    <property type="chains" value="A/B=22-179"/>
</dbReference>
<dbReference type="PDB" id="4AVJ">
    <property type="method" value="X-ray"/>
    <property type="resolution" value="2.10 A"/>
    <property type="chains" value="A/B=22-179"/>
</dbReference>
<dbReference type="PDB" id="4AVK">
    <property type="method" value="X-ray"/>
    <property type="resolution" value="2.40 A"/>
    <property type="chains" value="A/B=22-179"/>
</dbReference>
<dbReference type="PDB" id="4CSS">
    <property type="method" value="X-ray"/>
    <property type="resolution" value="1.07 A"/>
    <property type="chains" value="A=22-180"/>
</dbReference>
<dbReference type="PDB" id="4CST">
    <property type="method" value="X-ray"/>
    <property type="resolution" value="1.10 A"/>
    <property type="chains" value="A=22-180"/>
</dbReference>
<dbReference type="PDB" id="4J3O">
    <property type="method" value="X-ray"/>
    <property type="resolution" value="3.80 A"/>
    <property type="chains" value="H=22-300"/>
</dbReference>
<dbReference type="PDB" id="4LOV">
    <property type="method" value="X-ray"/>
    <property type="resolution" value="1.50 A"/>
    <property type="chains" value="A=22-179"/>
</dbReference>
<dbReference type="PDB" id="4X50">
    <property type="method" value="X-ray"/>
    <property type="resolution" value="2.00 A"/>
    <property type="chains" value="A/B=22-180"/>
</dbReference>
<dbReference type="PDB" id="4X5P">
    <property type="method" value="X-ray"/>
    <property type="resolution" value="1.00 A"/>
    <property type="chains" value="A=22-180"/>
</dbReference>
<dbReference type="PDB" id="4X5Q">
    <property type="method" value="X-ray"/>
    <property type="resolution" value="1.12 A"/>
    <property type="chains" value="A=22-180"/>
</dbReference>
<dbReference type="PDB" id="4X5R">
    <property type="method" value="X-ray"/>
    <property type="resolution" value="1.65 A"/>
    <property type="chains" value="A/B/C=22-180"/>
</dbReference>
<dbReference type="PDB" id="4XO8">
    <property type="method" value="X-ray"/>
    <property type="resolution" value="1.70 A"/>
    <property type="chains" value="A/B=22-179"/>
</dbReference>
<dbReference type="PDB" id="4XO9">
    <property type="method" value="X-ray"/>
    <property type="resolution" value="1.14 A"/>
    <property type="chains" value="A=22-300"/>
</dbReference>
<dbReference type="PDB" id="4XOA">
    <property type="method" value="X-ray"/>
    <property type="resolution" value="2.54 A"/>
    <property type="chains" value="A/C/E/G=22-300"/>
</dbReference>
<dbReference type="PDB" id="4XOB">
    <property type="method" value="X-ray"/>
    <property type="resolution" value="3.00 A"/>
    <property type="chains" value="A/C/E/G=22-300"/>
</dbReference>
<dbReference type="PDB" id="4XOD">
    <property type="method" value="X-ray"/>
    <property type="resolution" value="1.14 A"/>
    <property type="chains" value="A=22-300"/>
</dbReference>
<dbReference type="PDB" id="5ABZ">
    <property type="method" value="X-ray"/>
    <property type="resolution" value="2.40 A"/>
    <property type="chains" value="A/B=22-179"/>
</dbReference>
<dbReference type="PDB" id="5CGB">
    <property type="method" value="X-ray"/>
    <property type="resolution" value="1.60 A"/>
    <property type="chains" value="A/B=22-179"/>
</dbReference>
<dbReference type="PDB" id="5F2F">
    <property type="method" value="X-ray"/>
    <property type="resolution" value="1.67 A"/>
    <property type="chains" value="A=22-179"/>
</dbReference>
<dbReference type="PDB" id="5F3F">
    <property type="method" value="X-ray"/>
    <property type="resolution" value="1.76 A"/>
    <property type="chains" value="A=22-179"/>
</dbReference>
<dbReference type="PDB" id="5FS5">
    <property type="method" value="X-ray"/>
    <property type="resolution" value="1.42 A"/>
    <property type="chains" value="A=22-179"/>
</dbReference>
<dbReference type="PDB" id="5FWR">
    <property type="method" value="X-ray"/>
    <property type="resolution" value="2.13 A"/>
    <property type="chains" value="A/B/C/D/E/F/G/H=22-179"/>
</dbReference>
<dbReference type="PDB" id="5FX3">
    <property type="method" value="X-ray"/>
    <property type="resolution" value="1.90 A"/>
    <property type="chains" value="A=22-179"/>
</dbReference>
<dbReference type="PDB" id="5JCQ">
    <property type="method" value="X-ray"/>
    <property type="resolution" value="1.60 A"/>
    <property type="chains" value="A/B=22-179"/>
</dbReference>
<dbReference type="PDB" id="5JCR">
    <property type="method" value="X-ray"/>
    <property type="resolution" value="1.70 A"/>
    <property type="chains" value="A/B=22-179"/>
</dbReference>
<dbReference type="PDB" id="5L4T">
    <property type="method" value="X-ray"/>
    <property type="resolution" value="1.90 A"/>
    <property type="chains" value="A/B=22-179"/>
</dbReference>
<dbReference type="PDB" id="5L4U">
    <property type="method" value="X-ray"/>
    <property type="resolution" value="2.10 A"/>
    <property type="chains" value="A/B=22-179"/>
</dbReference>
<dbReference type="PDB" id="5L4V">
    <property type="method" value="X-ray"/>
    <property type="resolution" value="2.99 A"/>
    <property type="chains" value="A/B/C=22-179"/>
</dbReference>
<dbReference type="PDB" id="5L4W">
    <property type="method" value="X-ray"/>
    <property type="resolution" value="1.90 A"/>
    <property type="chains" value="A/B/C=22-179"/>
</dbReference>
<dbReference type="PDB" id="5L4X">
    <property type="method" value="X-ray"/>
    <property type="resolution" value="1.90 A"/>
    <property type="chains" value="A/B=22-179"/>
</dbReference>
<dbReference type="PDB" id="5L4Y">
    <property type="method" value="X-ray"/>
    <property type="resolution" value="1.90 A"/>
    <property type="chains" value="A/B=22-179"/>
</dbReference>
<dbReference type="PDB" id="5MCA">
    <property type="method" value="X-ray"/>
    <property type="resolution" value="1.60 A"/>
    <property type="chains" value="A=22-180"/>
</dbReference>
<dbReference type="PDB" id="5MTS">
    <property type="method" value="X-ray"/>
    <property type="resolution" value="2.60 A"/>
    <property type="chains" value="A/B=1-300"/>
</dbReference>
<dbReference type="PDB" id="5MUC">
    <property type="method" value="X-ray"/>
    <property type="resolution" value="2.60 A"/>
    <property type="chains" value="A/B=22-179"/>
</dbReference>
<dbReference type="PDB" id="6E14">
    <property type="method" value="EM"/>
    <property type="resolution" value="4.00 A"/>
    <property type="chains" value="H=1-300"/>
</dbReference>
<dbReference type="PDB" id="6E15">
    <property type="method" value="EM"/>
    <property type="resolution" value="6.20 A"/>
    <property type="chains" value="H=1-300"/>
</dbReference>
<dbReference type="PDB" id="6G2R">
    <property type="method" value="X-ray"/>
    <property type="resolution" value="2.10 A"/>
    <property type="chains" value="A/B=22-179"/>
</dbReference>
<dbReference type="PDB" id="6G2S">
    <property type="method" value="X-ray"/>
    <property type="resolution" value="2.20 A"/>
    <property type="chains" value="A/B/C/D/E/F/G/H/I=22-179"/>
</dbReference>
<dbReference type="PDB" id="6GTX">
    <property type="method" value="X-ray"/>
    <property type="resolution" value="2.50 A"/>
    <property type="chains" value="A/B/C/D=22-179"/>
</dbReference>
<dbReference type="PDB" id="6GTY">
    <property type="method" value="X-ray"/>
    <property type="resolution" value="1.90 A"/>
    <property type="chains" value="A/B/C/D/E=22-179"/>
</dbReference>
<dbReference type="PDB" id="6YHW">
    <property type="method" value="X-ray"/>
    <property type="resolution" value="1.96 A"/>
    <property type="chains" value="A/B=1-300"/>
</dbReference>
<dbReference type="PDB" id="7AYN">
    <property type="method" value="X-ray"/>
    <property type="resolution" value="1.42 A"/>
    <property type="chains" value="A/B/C/D=22-179"/>
</dbReference>
<dbReference type="PDB" id="7BHD">
    <property type="method" value="X-ray"/>
    <property type="resolution" value="1.40 A"/>
    <property type="chains" value="A/B=22-179"/>
</dbReference>
<dbReference type="PDB" id="7QUO">
    <property type="method" value="X-ray"/>
    <property type="resolution" value="3.00 A"/>
    <property type="chains" value="A/B/C/D=22-179"/>
</dbReference>
<dbReference type="PDB" id="7SZO">
    <property type="method" value="X-ray"/>
    <property type="resolution" value="2.80 A"/>
    <property type="chains" value="H/N=22-206, H/N=223-300"/>
</dbReference>
<dbReference type="PDB" id="8BVD">
    <property type="method" value="X-ray"/>
    <property type="resolution" value="3.00 A"/>
    <property type="chains" value="A/B/C/D=22-179"/>
</dbReference>
<dbReference type="PDB" id="8BXY">
    <property type="method" value="X-ray"/>
    <property type="resolution" value="1.45 A"/>
    <property type="chains" value="A/B=22-179"/>
</dbReference>
<dbReference type="PDB" id="8BY3">
    <property type="method" value="X-ray"/>
    <property type="resolution" value="3.19 A"/>
    <property type="chains" value="A/B/C/D=22-179"/>
</dbReference>
<dbReference type="PDB" id="9BOG">
    <property type="method" value="EM"/>
    <property type="resolution" value="3.99 A"/>
    <property type="chains" value="H=22-300"/>
</dbReference>
<dbReference type="PDBsum" id="1KIU"/>
<dbReference type="PDBsum" id="1KLF"/>
<dbReference type="PDBsum" id="1QUN"/>
<dbReference type="PDBsum" id="1TR7"/>
<dbReference type="PDBsum" id="1UWF"/>
<dbReference type="PDBsum" id="1ZE3"/>
<dbReference type="PDBsum" id="2VCO"/>
<dbReference type="PDBsum" id="3RFZ"/>
<dbReference type="PDBsum" id="3ZL1"/>
<dbReference type="PDBsum" id="3ZL2"/>
<dbReference type="PDBsum" id="4ATT"/>
<dbReference type="PDBsum" id="4AUJ"/>
<dbReference type="PDBsum" id="4AUU"/>
<dbReference type="PDBsum" id="4AUY"/>
<dbReference type="PDBsum" id="4AV0"/>
<dbReference type="PDBsum" id="4AV4"/>
<dbReference type="PDBsum" id="4AV5"/>
<dbReference type="PDBsum" id="4AVH"/>
<dbReference type="PDBsum" id="4AVI"/>
<dbReference type="PDBsum" id="4AVJ"/>
<dbReference type="PDBsum" id="4AVK"/>
<dbReference type="PDBsum" id="4CSS"/>
<dbReference type="PDBsum" id="4CST"/>
<dbReference type="PDBsum" id="4J3O"/>
<dbReference type="PDBsum" id="4LOV"/>
<dbReference type="PDBsum" id="4X50"/>
<dbReference type="PDBsum" id="4X5P"/>
<dbReference type="PDBsum" id="4X5Q"/>
<dbReference type="PDBsum" id="4X5R"/>
<dbReference type="PDBsum" id="4XO8"/>
<dbReference type="PDBsum" id="4XO9"/>
<dbReference type="PDBsum" id="4XOA"/>
<dbReference type="PDBsum" id="4XOB"/>
<dbReference type="PDBsum" id="4XOD"/>
<dbReference type="PDBsum" id="5ABZ"/>
<dbReference type="PDBsum" id="5CGB"/>
<dbReference type="PDBsum" id="5F2F"/>
<dbReference type="PDBsum" id="5F3F"/>
<dbReference type="PDBsum" id="5FS5"/>
<dbReference type="PDBsum" id="5FWR"/>
<dbReference type="PDBsum" id="5FX3"/>
<dbReference type="PDBsum" id="5JCQ"/>
<dbReference type="PDBsum" id="5JCR"/>
<dbReference type="PDBsum" id="5L4T"/>
<dbReference type="PDBsum" id="5L4U"/>
<dbReference type="PDBsum" id="5L4V"/>
<dbReference type="PDBsum" id="5L4W"/>
<dbReference type="PDBsum" id="5L4X"/>
<dbReference type="PDBsum" id="5L4Y"/>
<dbReference type="PDBsum" id="5MCA"/>
<dbReference type="PDBsum" id="5MTS"/>
<dbReference type="PDBsum" id="5MUC"/>
<dbReference type="PDBsum" id="6E14"/>
<dbReference type="PDBsum" id="6E15"/>
<dbReference type="PDBsum" id="6G2R"/>
<dbReference type="PDBsum" id="6G2S"/>
<dbReference type="PDBsum" id="6GTX"/>
<dbReference type="PDBsum" id="6GTY"/>
<dbReference type="PDBsum" id="6YHW"/>
<dbReference type="PDBsum" id="7AYN"/>
<dbReference type="PDBsum" id="7BHD"/>
<dbReference type="PDBsum" id="7QUO"/>
<dbReference type="PDBsum" id="7SZO"/>
<dbReference type="PDBsum" id="8BVD"/>
<dbReference type="PDBsum" id="8BXY"/>
<dbReference type="PDBsum" id="8BY3"/>
<dbReference type="PDBsum" id="9BOG"/>
<dbReference type="BMRB" id="P08191"/>
<dbReference type="EMDB" id="EMD-44735"/>
<dbReference type="EMDB" id="EMD-8953"/>
<dbReference type="EMDB" id="EMD-8954"/>
<dbReference type="SMR" id="P08191"/>
<dbReference type="BioGRID" id="4262737">
    <property type="interactions" value="8"/>
</dbReference>
<dbReference type="ComplexPortal" id="CPX-2855">
    <property type="entry name" value="Fimbrial Tip Complex FimFGH"/>
</dbReference>
<dbReference type="DIP" id="DIP-9616N"/>
<dbReference type="FunCoup" id="P08191">
    <property type="interactions" value="61"/>
</dbReference>
<dbReference type="IntAct" id="P08191">
    <property type="interactions" value="3"/>
</dbReference>
<dbReference type="STRING" id="511145.b4320"/>
<dbReference type="BindingDB" id="P08191"/>
<dbReference type="ChEMBL" id="CHEMBL4837"/>
<dbReference type="UniLectin" id="P08191"/>
<dbReference type="PaxDb" id="511145-b4320"/>
<dbReference type="EnsemblBacteria" id="AAC77276">
    <property type="protein sequence ID" value="AAC77276"/>
    <property type="gene ID" value="b4320"/>
</dbReference>
<dbReference type="GeneID" id="948847"/>
<dbReference type="KEGG" id="ecj:JW4283"/>
<dbReference type="KEGG" id="eco:b4320"/>
<dbReference type="KEGG" id="ecoc:C3026_23335"/>
<dbReference type="PATRIC" id="fig|1411691.4.peg.2372"/>
<dbReference type="EchoBASE" id="EB0311"/>
<dbReference type="eggNOG" id="COG3539">
    <property type="taxonomic scope" value="Bacteria"/>
</dbReference>
<dbReference type="HOGENOM" id="CLU_080390_0_0_6"/>
<dbReference type="InParanoid" id="P08191"/>
<dbReference type="OMA" id="QFIWNIY"/>
<dbReference type="OrthoDB" id="6466816at2"/>
<dbReference type="BioCyc" id="EcoCyc:EG10315-MONOMER"/>
<dbReference type="EvolutionaryTrace" id="P08191"/>
<dbReference type="PHI-base" id="PHI:11259"/>
<dbReference type="PHI-base" id="PHI:2690"/>
<dbReference type="PHI-base" id="PHI:7180"/>
<dbReference type="PHI-base" id="PHI:7204"/>
<dbReference type="PHI-base" id="PHI:7846"/>
<dbReference type="PHI-base" id="PHI:8107"/>
<dbReference type="PHI-base" id="PHI:9788"/>
<dbReference type="PRO" id="PR:P08191"/>
<dbReference type="Proteomes" id="UP000000625">
    <property type="component" value="Chromosome"/>
</dbReference>
<dbReference type="GO" id="GO:0033644">
    <property type="term" value="C:host cell membrane"/>
    <property type="evidence" value="ECO:0000314"/>
    <property type="project" value="UniProtKB"/>
</dbReference>
<dbReference type="GO" id="GO:0009289">
    <property type="term" value="C:pilus"/>
    <property type="evidence" value="ECO:0000315"/>
    <property type="project" value="EcoCyc"/>
</dbReference>
<dbReference type="GO" id="GO:0009419">
    <property type="term" value="C:pilus tip"/>
    <property type="evidence" value="ECO:0000353"/>
    <property type="project" value="ComplexPortal"/>
</dbReference>
<dbReference type="GO" id="GO:0005537">
    <property type="term" value="F:D-mannose binding"/>
    <property type="evidence" value="ECO:0000314"/>
    <property type="project" value="EcoCyc"/>
</dbReference>
<dbReference type="GO" id="GO:0007155">
    <property type="term" value="P:cell adhesion"/>
    <property type="evidence" value="ECO:0000315"/>
    <property type="project" value="ComplexPortal"/>
</dbReference>
<dbReference type="GO" id="GO:0043709">
    <property type="term" value="P:cell adhesion involved in single-species biofilm formation"/>
    <property type="evidence" value="ECO:0000318"/>
    <property type="project" value="GO_Central"/>
</dbReference>
<dbReference type="GO" id="GO:0031589">
    <property type="term" value="P:cell-substrate adhesion"/>
    <property type="evidence" value="ECO:0000315"/>
    <property type="project" value="ComplexPortal"/>
</dbReference>
<dbReference type="GO" id="GO:0007638">
    <property type="term" value="P:mechanosensory behavior"/>
    <property type="evidence" value="ECO:0000314"/>
    <property type="project" value="ComplexPortal"/>
</dbReference>
<dbReference type="CDD" id="cd10466">
    <property type="entry name" value="FimH_man-bind"/>
    <property type="match status" value="1"/>
</dbReference>
<dbReference type="FunFam" id="2.60.40.1090:FF:000015">
    <property type="entry name" value="Type 1 fimbrin D-mannose specific adhesin"/>
    <property type="match status" value="1"/>
</dbReference>
<dbReference type="FunFam" id="2.60.40.1090:FF:000017">
    <property type="entry name" value="Type 1 fimbrin D-mannose specific adhesin"/>
    <property type="match status" value="1"/>
</dbReference>
<dbReference type="Gene3D" id="2.60.40.1090">
    <property type="entry name" value="Fimbrial-type adhesion domain"/>
    <property type="match status" value="2"/>
</dbReference>
<dbReference type="InterPro" id="IPR000259">
    <property type="entry name" value="Adhesion_dom_fimbrial"/>
</dbReference>
<dbReference type="InterPro" id="IPR036937">
    <property type="entry name" value="Adhesion_dom_fimbrial_sf"/>
</dbReference>
<dbReference type="InterPro" id="IPR008966">
    <property type="entry name" value="Adhesion_dom_sf"/>
</dbReference>
<dbReference type="InterPro" id="IPR050263">
    <property type="entry name" value="Bact_Fimbrial_Adh_Pro"/>
</dbReference>
<dbReference type="InterPro" id="IPR015243">
    <property type="entry name" value="FimH_man-bd"/>
</dbReference>
<dbReference type="PANTHER" id="PTHR33420">
    <property type="entry name" value="FIMBRIAL SUBUNIT ELFA-RELATED"/>
    <property type="match status" value="1"/>
</dbReference>
<dbReference type="PANTHER" id="PTHR33420:SF14">
    <property type="entry name" value="TYPE 1 FIMBRIN D-MANNOSE SPECIFIC ADHESIN"/>
    <property type="match status" value="1"/>
</dbReference>
<dbReference type="Pfam" id="PF00419">
    <property type="entry name" value="Fimbrial"/>
    <property type="match status" value="1"/>
</dbReference>
<dbReference type="Pfam" id="PF09160">
    <property type="entry name" value="FimH_man-bind"/>
    <property type="match status" value="1"/>
</dbReference>
<dbReference type="SUPFAM" id="SSF49401">
    <property type="entry name" value="Bacterial adhesins"/>
    <property type="match status" value="2"/>
</dbReference>
<feature type="signal peptide" evidence="2">
    <location>
        <begin position="1"/>
        <end position="21"/>
    </location>
</feature>
<feature type="chain" id="PRO_0000009211" description="Type 1 fimbrin D-mannose specific adhesin">
    <location>
        <begin position="22"/>
        <end position="300"/>
    </location>
</feature>
<feature type="sequence conflict" description="In Ref. 2; no nucleotide entry." evidence="3" ref="2">
    <original>L</original>
    <variation>R</variation>
    <location>
        <position position="79"/>
    </location>
</feature>
<feature type="sequence conflict" description="In Ref. 1; CAA29156." evidence="3" ref="1">
    <original>P</original>
    <variation>R</variation>
    <location>
        <position position="197"/>
    </location>
</feature>
<feature type="sequence conflict" description="In Ref. 1; CAA29156 and 2; no nucleotide entry." evidence="3" ref="1 2">
    <original>T</original>
    <variation>H</variation>
    <location>
        <position position="222"/>
    </location>
</feature>
<feature type="strand" evidence="6">
    <location>
        <begin position="23"/>
        <end position="26"/>
    </location>
</feature>
<feature type="strand" evidence="6">
    <location>
        <begin position="37"/>
        <end position="43"/>
    </location>
</feature>
<feature type="strand" evidence="9">
    <location>
        <begin position="48"/>
        <end position="50"/>
    </location>
</feature>
<feature type="strand" evidence="6">
    <location>
        <begin position="55"/>
        <end position="58"/>
    </location>
</feature>
<feature type="helix" evidence="6">
    <location>
        <begin position="59"/>
        <end position="61"/>
    </location>
</feature>
<feature type="strand" evidence="6">
    <location>
        <begin position="63"/>
        <end position="66"/>
    </location>
</feature>
<feature type="turn" evidence="6">
    <location>
        <begin position="70"/>
        <end position="72"/>
    </location>
</feature>
<feature type="strand" evidence="6">
    <location>
        <begin position="75"/>
        <end position="84"/>
    </location>
</feature>
<feature type="helix" evidence="6">
    <location>
        <begin position="86"/>
        <end position="91"/>
    </location>
</feature>
<feature type="strand" evidence="6">
    <location>
        <begin position="92"/>
        <end position="98"/>
    </location>
</feature>
<feature type="strand" evidence="6">
    <location>
        <begin position="101"/>
        <end position="106"/>
    </location>
</feature>
<feature type="strand" evidence="6">
    <location>
        <begin position="114"/>
        <end position="116"/>
    </location>
</feature>
<feature type="strand" evidence="7">
    <location>
        <begin position="118"/>
        <end position="120"/>
    </location>
</feature>
<feature type="strand" evidence="6">
    <location>
        <begin position="126"/>
        <end position="132"/>
    </location>
</feature>
<feature type="strand" evidence="7">
    <location>
        <begin position="134"/>
        <end position="136"/>
    </location>
</feature>
<feature type="strand" evidence="6">
    <location>
        <begin position="138"/>
        <end position="141"/>
    </location>
</feature>
<feature type="strand" evidence="6">
    <location>
        <begin position="146"/>
        <end position="159"/>
    </location>
</feature>
<feature type="strand" evidence="6">
    <location>
        <begin position="163"/>
        <end position="173"/>
    </location>
</feature>
<feature type="strand" evidence="6">
    <location>
        <begin position="175"/>
        <end position="177"/>
    </location>
</feature>
<feature type="strand" evidence="7">
    <location>
        <begin position="180"/>
        <end position="185"/>
    </location>
</feature>
<feature type="strand" evidence="7">
    <location>
        <begin position="187"/>
        <end position="192"/>
    </location>
</feature>
<feature type="strand" evidence="5">
    <location>
        <begin position="195"/>
        <end position="197"/>
    </location>
</feature>
<feature type="strand" evidence="4">
    <location>
        <begin position="200"/>
        <end position="202"/>
    </location>
</feature>
<feature type="strand" evidence="7">
    <location>
        <begin position="205"/>
        <end position="210"/>
    </location>
</feature>
<feature type="strand" evidence="7">
    <location>
        <begin position="212"/>
        <end position="220"/>
    </location>
</feature>
<feature type="strand" evidence="8">
    <location>
        <begin position="222"/>
        <end position="224"/>
    </location>
</feature>
<feature type="strand" evidence="7">
    <location>
        <begin position="235"/>
        <end position="238"/>
    </location>
</feature>
<feature type="strand" evidence="7">
    <location>
        <begin position="240"/>
        <end position="248"/>
    </location>
</feature>
<feature type="strand" evidence="7">
    <location>
        <begin position="259"/>
        <end position="264"/>
    </location>
</feature>
<feature type="strand" evidence="7">
    <location>
        <begin position="273"/>
        <end position="279"/>
    </location>
</feature>
<feature type="strand" evidence="4">
    <location>
        <begin position="281"/>
        <end position="283"/>
    </location>
</feature>
<feature type="strand" evidence="7">
    <location>
        <begin position="286"/>
        <end position="299"/>
    </location>
</feature>
<sequence length="300" mass="31473">MKRVITLFAVLLMGWSVNAWSFACKTANGTAIPIGGGSANVYVNLAPVVNVGQNLVVDLSTQIFCHNDYPETITDYVTLQRGSAYGGVLSNFSGTVKYSGSSYPFPTTSETPRVVYNSRTDKPWPVALYLTPVSSAGGVAIKAGSLIAVLILRQTNNYNSDDFQFVWNIYANNDVVVPTGGCDVSARDVTVTLPDYPGSVPIPLTVYCAKSQNLGYYLSGTTADAGNSIFTNTASFSPAQGVGVQLTRNGTIIPANNTVSLGAVGTSAVSLGLTANYARTGGQVTAGNVQSIIGVTFVYQ</sequence>